<gene>
    <name type="primary">yehX</name>
    <name type="ordered locus">b2129</name>
    <name type="ordered locus">JW2117</name>
</gene>
<evidence type="ECO:0000255" key="1">
    <source>
        <dbReference type="PROSITE-ProRule" id="PRU00434"/>
    </source>
</evidence>
<evidence type="ECO:0000269" key="2">
    <source>
    </source>
</evidence>
<evidence type="ECO:0000269" key="3">
    <source>
    </source>
</evidence>
<evidence type="ECO:0000305" key="4"/>
<evidence type="ECO:0000305" key="5">
    <source>
    </source>
</evidence>
<evidence type="ECO:0000305" key="6">
    <source>
    </source>
</evidence>
<feature type="chain" id="PRO_0000093167" description="Glycine betaine uptake system ATP-binding protein YehX">
    <location>
        <begin position="1"/>
        <end position="308"/>
    </location>
</feature>
<feature type="domain" description="ABC transporter" evidence="1">
    <location>
        <begin position="2"/>
        <end position="235"/>
    </location>
</feature>
<feature type="binding site" evidence="1">
    <location>
        <begin position="34"/>
        <end position="41"/>
    </location>
    <ligand>
        <name>ATP</name>
        <dbReference type="ChEBI" id="CHEBI:30616"/>
    </ligand>
</feature>
<name>YEHX_ECOLI</name>
<organism>
    <name type="scientific">Escherichia coli (strain K12)</name>
    <dbReference type="NCBI Taxonomy" id="83333"/>
    <lineage>
        <taxon>Bacteria</taxon>
        <taxon>Pseudomonadati</taxon>
        <taxon>Pseudomonadota</taxon>
        <taxon>Gammaproteobacteria</taxon>
        <taxon>Enterobacterales</taxon>
        <taxon>Enterobacteriaceae</taxon>
        <taxon>Escherichia</taxon>
    </lineage>
</organism>
<dbReference type="EC" id="7.4.2.-" evidence="4"/>
<dbReference type="EMBL" id="U00007">
    <property type="protein sequence ID" value="AAA60492.1"/>
    <property type="molecule type" value="Genomic_DNA"/>
</dbReference>
<dbReference type="EMBL" id="U00096">
    <property type="protein sequence ID" value="AAC75190.1"/>
    <property type="molecule type" value="Genomic_DNA"/>
</dbReference>
<dbReference type="EMBL" id="AP009048">
    <property type="protein sequence ID" value="BAE76606.1"/>
    <property type="molecule type" value="Genomic_DNA"/>
</dbReference>
<dbReference type="PIR" id="H64980">
    <property type="entry name" value="H64980"/>
</dbReference>
<dbReference type="RefSeq" id="NP_416633.1">
    <property type="nucleotide sequence ID" value="NC_000913.3"/>
</dbReference>
<dbReference type="RefSeq" id="WP_000569315.1">
    <property type="nucleotide sequence ID" value="NZ_LN832404.1"/>
</dbReference>
<dbReference type="SMR" id="P33360"/>
<dbReference type="BioGRID" id="4260448">
    <property type="interactions" value="39"/>
</dbReference>
<dbReference type="BioGRID" id="851001">
    <property type="interactions" value="1"/>
</dbReference>
<dbReference type="ComplexPortal" id="CPX-4449">
    <property type="entry name" value="Low affinity betaine ABC transporter complex"/>
</dbReference>
<dbReference type="DIP" id="DIP-11912N"/>
<dbReference type="FunCoup" id="P33360">
    <property type="interactions" value="392"/>
</dbReference>
<dbReference type="IntAct" id="P33360">
    <property type="interactions" value="8"/>
</dbReference>
<dbReference type="STRING" id="511145.b2129"/>
<dbReference type="TCDB" id="3.A.1.12.15">
    <property type="family name" value="the atp-binding cassette (abc) superfamily"/>
</dbReference>
<dbReference type="jPOST" id="P33360"/>
<dbReference type="PaxDb" id="511145-b2129"/>
<dbReference type="EnsemblBacteria" id="AAC75190">
    <property type="protein sequence ID" value="AAC75190"/>
    <property type="gene ID" value="b2129"/>
</dbReference>
<dbReference type="GeneID" id="946659"/>
<dbReference type="KEGG" id="ecj:JW2117"/>
<dbReference type="KEGG" id="eco:b2129"/>
<dbReference type="KEGG" id="ecoc:C3026_11940"/>
<dbReference type="PATRIC" id="fig|1411691.4.peg.115"/>
<dbReference type="EchoBASE" id="EB1948"/>
<dbReference type="eggNOG" id="COG1125">
    <property type="taxonomic scope" value="Bacteria"/>
</dbReference>
<dbReference type="HOGENOM" id="CLU_000604_1_5_6"/>
<dbReference type="InParanoid" id="P33360"/>
<dbReference type="OMA" id="MGYVIQQ"/>
<dbReference type="OrthoDB" id="9802264at2"/>
<dbReference type="PhylomeDB" id="P33360"/>
<dbReference type="BioCyc" id="EcoCyc:YEHX-MONOMER"/>
<dbReference type="BioCyc" id="MetaCyc:YEHX-MONOMER"/>
<dbReference type="PRO" id="PR:P33360"/>
<dbReference type="Proteomes" id="UP000000625">
    <property type="component" value="Chromosome"/>
</dbReference>
<dbReference type="GO" id="GO:0055052">
    <property type="term" value="C:ATP-binding cassette (ABC) transporter complex, substrate-binding subunit-containing"/>
    <property type="evidence" value="ECO:0000303"/>
    <property type="project" value="ComplexPortal"/>
</dbReference>
<dbReference type="GO" id="GO:0016020">
    <property type="term" value="C:membrane"/>
    <property type="evidence" value="ECO:0000303"/>
    <property type="project" value="ComplexPortal"/>
</dbReference>
<dbReference type="GO" id="GO:0031459">
    <property type="term" value="F:ABC-type glycine betaine transporter activity"/>
    <property type="evidence" value="ECO:0007669"/>
    <property type="project" value="RHEA"/>
</dbReference>
<dbReference type="GO" id="GO:0005524">
    <property type="term" value="F:ATP binding"/>
    <property type="evidence" value="ECO:0007669"/>
    <property type="project" value="UniProtKB-KW"/>
</dbReference>
<dbReference type="GO" id="GO:0016887">
    <property type="term" value="F:ATP hydrolysis activity"/>
    <property type="evidence" value="ECO:0007669"/>
    <property type="project" value="InterPro"/>
</dbReference>
<dbReference type="GO" id="GO:0006865">
    <property type="term" value="P:amino acid transport"/>
    <property type="evidence" value="ECO:0007669"/>
    <property type="project" value="UniProtKB-KW"/>
</dbReference>
<dbReference type="GO" id="GO:0015838">
    <property type="term" value="P:amino-acid betaine transport"/>
    <property type="evidence" value="ECO:0000303"/>
    <property type="project" value="ComplexPortal"/>
</dbReference>
<dbReference type="GO" id="GO:0031460">
    <property type="term" value="P:glycine betaine transport"/>
    <property type="evidence" value="ECO:0000314"/>
    <property type="project" value="EcoCyc"/>
</dbReference>
<dbReference type="CDD" id="cd03295">
    <property type="entry name" value="ABC_OpuCA_Osmoprotection"/>
    <property type="match status" value="1"/>
</dbReference>
<dbReference type="FunFam" id="3.40.50.300:FF:000425">
    <property type="entry name" value="Probable ABC transporter, ATP-binding subunit"/>
    <property type="match status" value="1"/>
</dbReference>
<dbReference type="Gene3D" id="3.40.50.300">
    <property type="entry name" value="P-loop containing nucleotide triphosphate hydrolases"/>
    <property type="match status" value="1"/>
</dbReference>
<dbReference type="InterPro" id="IPR003593">
    <property type="entry name" value="AAA+_ATPase"/>
</dbReference>
<dbReference type="InterPro" id="IPR003439">
    <property type="entry name" value="ABC_transporter-like_ATP-bd"/>
</dbReference>
<dbReference type="InterPro" id="IPR017871">
    <property type="entry name" value="ABC_transporter-like_CS"/>
</dbReference>
<dbReference type="InterPro" id="IPR000644">
    <property type="entry name" value="CBS_dom"/>
</dbReference>
<dbReference type="InterPro" id="IPR046342">
    <property type="entry name" value="CBS_dom_sf"/>
</dbReference>
<dbReference type="InterPro" id="IPR027417">
    <property type="entry name" value="P-loop_NTPase"/>
</dbReference>
<dbReference type="PANTHER" id="PTHR43117:SF5">
    <property type="entry name" value="GLYCINE BETAINE UPTAKE SYSTEM ATP-BINDING PROTEIN YEHX"/>
    <property type="match status" value="1"/>
</dbReference>
<dbReference type="PANTHER" id="PTHR43117">
    <property type="entry name" value="OSMOPROTECTANT IMPORT ATP-BINDING PROTEIN OSMV"/>
    <property type="match status" value="1"/>
</dbReference>
<dbReference type="Pfam" id="PF00005">
    <property type="entry name" value="ABC_tran"/>
    <property type="match status" value="1"/>
</dbReference>
<dbReference type="Pfam" id="PF00571">
    <property type="entry name" value="CBS"/>
    <property type="match status" value="1"/>
</dbReference>
<dbReference type="SMART" id="SM00382">
    <property type="entry name" value="AAA"/>
    <property type="match status" value="1"/>
</dbReference>
<dbReference type="SUPFAM" id="SSF54631">
    <property type="entry name" value="CBS-domain pair"/>
    <property type="match status" value="1"/>
</dbReference>
<dbReference type="SUPFAM" id="SSF52540">
    <property type="entry name" value="P-loop containing nucleoside triphosphate hydrolases"/>
    <property type="match status" value="1"/>
</dbReference>
<dbReference type="PROSITE" id="PS00211">
    <property type="entry name" value="ABC_TRANSPORTER_1"/>
    <property type="match status" value="1"/>
</dbReference>
<dbReference type="PROSITE" id="PS50893">
    <property type="entry name" value="ABC_TRANSPORTER_2"/>
    <property type="match status" value="1"/>
</dbReference>
<proteinExistence type="evidence at protein level"/>
<accession>P33360</accession>
<accession>Q2MAV0</accession>
<protein>
    <recommendedName>
        <fullName evidence="4">Glycine betaine uptake system ATP-binding protein YehX</fullName>
        <ecNumber evidence="4">7.4.2.-</ecNumber>
    </recommendedName>
</protein>
<sequence length="308" mass="34425">MIEFSHVSKLFGAQKAVNDLNLNFQEGSFSVLIGTSGSGKSTTLKMINRLVEHDSGEIRFAGEEIRSLPVLELRRRMGYAIQSIGLFPHWSVAQNIATVPQLQKWSRARIDDRIDELMALLGLESNLRERYPHQLSGGQQQRVGVARALAADPQVLLMDEPFGALDPVTRGALQQEMTRIHRLLGRTIVLVTHDIDEALRLAEHLVLMDHGEVVQQGNPLTMLTRPANDFVRQFFGRSELGVRLLSLRSVADYVRREERADGEALAEEMTLRDALSLFVARGCEVLPVVNMQGQPCGTLHFQDLLVEA</sequence>
<reference key="1">
    <citation type="submission" date="1993-10" db="EMBL/GenBank/DDBJ databases">
        <title>Automated multiplex sequencing of the E.coli genome.</title>
        <authorList>
            <person name="Richterich P."/>
            <person name="Lakey N."/>
            <person name="Gryan G."/>
            <person name="Jaehn L."/>
            <person name="Mintz L."/>
            <person name="Robison K."/>
            <person name="Church G.M."/>
        </authorList>
    </citation>
    <scope>NUCLEOTIDE SEQUENCE [LARGE SCALE GENOMIC DNA]</scope>
    <source>
        <strain>K12 / BHB2600</strain>
    </source>
</reference>
<reference key="2">
    <citation type="journal article" date="1997" name="Science">
        <title>The complete genome sequence of Escherichia coli K-12.</title>
        <authorList>
            <person name="Blattner F.R."/>
            <person name="Plunkett G. III"/>
            <person name="Bloch C.A."/>
            <person name="Perna N.T."/>
            <person name="Burland V."/>
            <person name="Riley M."/>
            <person name="Collado-Vides J."/>
            <person name="Glasner J.D."/>
            <person name="Rode C.K."/>
            <person name="Mayhew G.F."/>
            <person name="Gregor J."/>
            <person name="Davis N.W."/>
            <person name="Kirkpatrick H.A."/>
            <person name="Goeden M.A."/>
            <person name="Rose D.J."/>
            <person name="Mau B."/>
            <person name="Shao Y."/>
        </authorList>
    </citation>
    <scope>NUCLEOTIDE SEQUENCE [LARGE SCALE GENOMIC DNA]</scope>
    <source>
        <strain>K12 / MG1655 / ATCC 47076</strain>
    </source>
</reference>
<reference key="3">
    <citation type="journal article" date="2006" name="Mol. Syst. Biol.">
        <title>Highly accurate genome sequences of Escherichia coli K-12 strains MG1655 and W3110.</title>
        <authorList>
            <person name="Hayashi K."/>
            <person name="Morooka N."/>
            <person name="Yamamoto Y."/>
            <person name="Fujita K."/>
            <person name="Isono K."/>
            <person name="Choi S."/>
            <person name="Ohtsubo E."/>
            <person name="Baba T."/>
            <person name="Wanner B.L."/>
            <person name="Mori H."/>
            <person name="Horiuchi T."/>
        </authorList>
    </citation>
    <scope>NUCLEOTIDE SEQUENCE [LARGE SCALE GENOMIC DNA]</scope>
    <source>
        <strain>K12 / W3110 / ATCC 27325 / DSM 5911</strain>
    </source>
</reference>
<reference key="4">
    <citation type="journal article" date="2004" name="FEMS Microbiol. Lett.">
        <title>Sigma(s)-dependent regulation of yehZYXW, which encodes a putative osmoprotectant ABC transporter of Escherichia coli.</title>
        <authorList>
            <person name="Checroun C."/>
            <person name="Gutierrez C."/>
        </authorList>
    </citation>
    <scope>INDUCTION</scope>
    <source>
        <strain>K12 / MC4100 / ATCC 35695 / DSM 6574</strain>
    </source>
</reference>
<reference key="5">
    <citation type="journal article" date="2015" name="Biochemistry">
        <title>YehZYXW of Escherichia coli is a low-affinity, non-osmoregulatory betaine-specific ABC transporter.</title>
        <authorList>
            <person name="Lang S."/>
            <person name="Cressatti M."/>
            <person name="Mendoza K.E."/>
            <person name="Coumoundouros C.N."/>
            <person name="Plater S.M."/>
            <person name="Culham D.E."/>
            <person name="Kimber M.S."/>
            <person name="Wood J.M."/>
        </authorList>
    </citation>
    <scope>FUNCTION IN GLYCINE BETAINE UPTAKE</scope>
    <source>
        <strain>K12 / MG1655 / ATCC 47076</strain>
    </source>
</reference>
<comment type="function">
    <text evidence="3">Part of an ABC transporter complex involved in low-affinity glycine betaine uptake. Probably responsible for energy coupling to the transport system.</text>
</comment>
<comment type="catalytic activity">
    <reaction evidence="6">
        <text>glycine betaine(out) + ATP + H2O = glycine betaine(in) + ADP + phosphate + H(+)</text>
        <dbReference type="Rhea" id="RHEA:32783"/>
        <dbReference type="ChEBI" id="CHEBI:15377"/>
        <dbReference type="ChEBI" id="CHEBI:15378"/>
        <dbReference type="ChEBI" id="CHEBI:17750"/>
        <dbReference type="ChEBI" id="CHEBI:30616"/>
        <dbReference type="ChEBI" id="CHEBI:43474"/>
        <dbReference type="ChEBI" id="CHEBI:456216"/>
    </reaction>
</comment>
<comment type="subunit">
    <text evidence="4">The complex is composed of two ATP-binding proteins (YehX), two transmembrane proteins (YehW and YehY) and a solute-binding protein (YehZ).</text>
</comment>
<comment type="induction">
    <text evidence="2">Expression is sigma S-dependent. Induced by both osmotic shock and entry into stationary phase.</text>
</comment>
<comment type="similarity">
    <text evidence="4">Belongs to the ABC transporter superfamily.</text>
</comment>
<comment type="caution">
    <text evidence="5 6">Was originally thought to be part of an osmoprotectant uptake system (PubMed:15251200). However, it was shown later that the complex does not mediate osmotic stress protection (PubMed:26325238).</text>
</comment>
<keyword id="KW-0029">Amino-acid transport</keyword>
<keyword id="KW-0067">ATP-binding</keyword>
<keyword id="KW-0547">Nucleotide-binding</keyword>
<keyword id="KW-1185">Reference proteome</keyword>
<keyword id="KW-1278">Translocase</keyword>
<keyword id="KW-0813">Transport</keyword>